<gene>
    <name type="primary">vanTE</name>
</gene>
<evidence type="ECO:0000250" key="1"/>
<evidence type="ECO:0000255" key="2"/>
<evidence type="ECO:0000305" key="3"/>
<proteinExistence type="inferred from homology"/>
<sequence length="702" mass="79440">MKHRANGIDLFRIFAATMVVAIHTFPFQSIAPFLDEVITLTVFRVAVPFFFMITGYFLLGRLSLNFSYNNNQRVKKYLYKIGMIYLYSILLYFPLSLLNGTISLKMNILLLLKVFIFDGTFYHLWYFPASIIGTILVTLLLRSIGFKLTVAFSTCLYLVGLGGDSWYGITNQVPLLNKLYTFIFSWSDYTRSGVFFTPVFLCLGIFAYRVSKKLTASKILNLLFYVFIIGMTFESIFLHRFTNVKHDSMYLLLPSCALILFLMLLNWQPKLKVKESADLTLLVYILHPLVIVIVHSISKYIPILKNSLLNFLLVVVCSFILAQLLLNLKRKLRVSKQKIPFERASKEISASAIHHNINEIRKIIPKNTNIMGVVKANAYGCGMVEVAYELEKIGISFFCVATIEEAIALRKSGNQGDILILGYTHPNRINDIKKYNLIQSIVSEEHGKVLNLKKIPIRCHLQVDTGMHRLGVTPNVTIIQQMYLFSNLKIEGIYSHLGSSDSLEQESIARTNTQIFLFNNILSDLEQMGISYGYTHIQSSYGILNYPELSFDFVRIGILCYGFLSDYNSPTKIPIDLQPIVKVKASLITERIVEAGEYVGYGLGAKVEKRTRIGVVSIGYADGIPRALSNAKLTLEFKGQSIKQIGNICMDMMLVDLSEVEDISLNDELIVLPNISKIADEEQTITNELLSRLGSRLGTELN</sequence>
<organism>
    <name type="scientific">Enterococcus faecalis</name>
    <name type="common">Streptococcus faecalis</name>
    <dbReference type="NCBI Taxonomy" id="1351"/>
    <lineage>
        <taxon>Bacteria</taxon>
        <taxon>Bacillati</taxon>
        <taxon>Bacillota</taxon>
        <taxon>Bacilli</taxon>
        <taxon>Lactobacillales</taxon>
        <taxon>Enterococcaceae</taxon>
        <taxon>Enterococcus</taxon>
    </lineage>
</organism>
<keyword id="KW-0046">Antibiotic resistance</keyword>
<keyword id="KW-1003">Cell membrane</keyword>
<keyword id="KW-0413">Isomerase</keyword>
<keyword id="KW-0472">Membrane</keyword>
<keyword id="KW-0663">Pyridoxal phosphate</keyword>
<keyword id="KW-0812">Transmembrane</keyword>
<keyword id="KW-1133">Transmembrane helix</keyword>
<reference key="1">
    <citation type="journal article" date="2002" name="Antimicrob. Agents Chemother.">
        <title>Molecular characterization of the vanE gene cluster in vancomycin-resistant Enterococcus faecalis N00-410 isolated in Canada.</title>
        <authorList>
            <person name="Boyd D.A."/>
            <person name="Cabral T."/>
            <person name="Van Caeseele P."/>
            <person name="Wylie J."/>
            <person name="Mulvey M.R."/>
        </authorList>
    </citation>
    <scope>NUCLEOTIDE SEQUENCE [GENOMIC DNA]</scope>
    <source>
        <strain>N00-410</strain>
    </source>
</reference>
<protein>
    <recommendedName>
        <fullName>Amino-acid racemase</fullName>
        <ecNumber>5.1.1.-</ecNumber>
    </recommendedName>
    <alternativeName>
        <fullName>Vancomycin E-type resistance protein VanT</fullName>
    </alternativeName>
</protein>
<dbReference type="EC" id="5.1.1.-"/>
<dbReference type="EMBL" id="FJ872411">
    <property type="protein sequence ID" value="AAL27444.1"/>
    <property type="molecule type" value="Genomic_DNA"/>
</dbReference>
<dbReference type="RefSeq" id="WP_063856753.1">
    <property type="nucleotide sequence ID" value="NG_048456.1"/>
</dbReference>
<dbReference type="SMR" id="Q93A44"/>
<dbReference type="CARD" id="ARO:3002971">
    <property type="molecule name" value="vanT_in_vanE_cl"/>
    <property type="mechanism identifier" value="ARO:0001001"/>
    <property type="mechanism name" value="antibiotic target alteration"/>
</dbReference>
<dbReference type="GO" id="GO:0005829">
    <property type="term" value="C:cytosol"/>
    <property type="evidence" value="ECO:0007669"/>
    <property type="project" value="TreeGrafter"/>
</dbReference>
<dbReference type="GO" id="GO:0005886">
    <property type="term" value="C:plasma membrane"/>
    <property type="evidence" value="ECO:0007669"/>
    <property type="project" value="UniProtKB-SubCell"/>
</dbReference>
<dbReference type="GO" id="GO:0016747">
    <property type="term" value="F:acyltransferase activity, transferring groups other than amino-acyl groups"/>
    <property type="evidence" value="ECO:0007669"/>
    <property type="project" value="InterPro"/>
</dbReference>
<dbReference type="GO" id="GO:0008784">
    <property type="term" value="F:alanine racemase activity"/>
    <property type="evidence" value="ECO:0007669"/>
    <property type="project" value="UniProtKB-UniRule"/>
</dbReference>
<dbReference type="GO" id="GO:0030170">
    <property type="term" value="F:pyridoxal phosphate binding"/>
    <property type="evidence" value="ECO:0007669"/>
    <property type="project" value="UniProtKB-UniRule"/>
</dbReference>
<dbReference type="GO" id="GO:0030632">
    <property type="term" value="P:D-alanine biosynthetic process"/>
    <property type="evidence" value="ECO:0007669"/>
    <property type="project" value="UniProtKB-UniRule"/>
</dbReference>
<dbReference type="GO" id="GO:0046677">
    <property type="term" value="P:response to antibiotic"/>
    <property type="evidence" value="ECO:0007669"/>
    <property type="project" value="UniProtKB-KW"/>
</dbReference>
<dbReference type="FunFam" id="3.20.20.10:FF:000002">
    <property type="entry name" value="Alanine racemase"/>
    <property type="match status" value="1"/>
</dbReference>
<dbReference type="Gene3D" id="3.20.20.10">
    <property type="entry name" value="Alanine racemase"/>
    <property type="match status" value="1"/>
</dbReference>
<dbReference type="Gene3D" id="2.40.37.10">
    <property type="entry name" value="Lyase, Ornithine Decarboxylase, Chain A, domain 1"/>
    <property type="match status" value="1"/>
</dbReference>
<dbReference type="HAMAP" id="MF_01201">
    <property type="entry name" value="Ala_racemase"/>
    <property type="match status" value="1"/>
</dbReference>
<dbReference type="InterPro" id="IPR002656">
    <property type="entry name" value="Acyl_transf_3_dom"/>
</dbReference>
<dbReference type="InterPro" id="IPR000821">
    <property type="entry name" value="Ala_racemase"/>
</dbReference>
<dbReference type="InterPro" id="IPR009006">
    <property type="entry name" value="Ala_racemase/Decarboxylase_C"/>
</dbReference>
<dbReference type="InterPro" id="IPR011079">
    <property type="entry name" value="Ala_racemase_C"/>
</dbReference>
<dbReference type="InterPro" id="IPR001608">
    <property type="entry name" value="Ala_racemase_N"/>
</dbReference>
<dbReference type="InterPro" id="IPR020622">
    <property type="entry name" value="Ala_racemase_pyridoxalP-BS"/>
</dbReference>
<dbReference type="InterPro" id="IPR029066">
    <property type="entry name" value="PLP-binding_barrel"/>
</dbReference>
<dbReference type="InterPro" id="IPR011248">
    <property type="entry name" value="Serine/alanine_racemase"/>
</dbReference>
<dbReference type="NCBIfam" id="TIGR00492">
    <property type="entry name" value="alr"/>
    <property type="match status" value="1"/>
</dbReference>
<dbReference type="NCBIfam" id="NF033132">
    <property type="entry name" value="vanT-CELN"/>
    <property type="match status" value="1"/>
</dbReference>
<dbReference type="PANTHER" id="PTHR30511">
    <property type="entry name" value="ALANINE RACEMASE"/>
    <property type="match status" value="1"/>
</dbReference>
<dbReference type="PANTHER" id="PTHR30511:SF0">
    <property type="entry name" value="ALANINE RACEMASE, CATABOLIC-RELATED"/>
    <property type="match status" value="1"/>
</dbReference>
<dbReference type="Pfam" id="PF01757">
    <property type="entry name" value="Acyl_transf_3"/>
    <property type="match status" value="1"/>
</dbReference>
<dbReference type="Pfam" id="PF00842">
    <property type="entry name" value="Ala_racemase_C"/>
    <property type="match status" value="1"/>
</dbReference>
<dbReference type="Pfam" id="PF01168">
    <property type="entry name" value="Ala_racemase_N"/>
    <property type="match status" value="1"/>
</dbReference>
<dbReference type="PIRSF" id="PIRSF036464">
    <property type="entry name" value="Ser_ala_racem"/>
    <property type="match status" value="1"/>
</dbReference>
<dbReference type="PRINTS" id="PR00992">
    <property type="entry name" value="ALARACEMASE"/>
</dbReference>
<dbReference type="SMART" id="SM01005">
    <property type="entry name" value="Ala_racemase_C"/>
    <property type="match status" value="1"/>
</dbReference>
<dbReference type="SUPFAM" id="SSF50621">
    <property type="entry name" value="Alanine racemase C-terminal domain-like"/>
    <property type="match status" value="1"/>
</dbReference>
<dbReference type="SUPFAM" id="SSF51419">
    <property type="entry name" value="PLP-binding barrel"/>
    <property type="match status" value="1"/>
</dbReference>
<dbReference type="PROSITE" id="PS00395">
    <property type="entry name" value="ALANINE_RACEMASE"/>
    <property type="match status" value="1"/>
</dbReference>
<accession>Q93A44</accession>
<name>VANTE_ENTFL</name>
<feature type="chain" id="PRO_0000114608" description="Amino-acid racemase">
    <location>
        <begin position="1"/>
        <end position="702"/>
    </location>
</feature>
<feature type="topological domain" description="Cytoplasmic" evidence="2">
    <location>
        <begin position="1"/>
        <end position="12"/>
    </location>
</feature>
<feature type="transmembrane region" description="Helical" evidence="2">
    <location>
        <begin position="13"/>
        <end position="33"/>
    </location>
</feature>
<feature type="topological domain" description="Extracellular" evidence="2">
    <location>
        <begin position="34"/>
        <end position="39"/>
    </location>
</feature>
<feature type="transmembrane region" description="Helical" evidence="2">
    <location>
        <begin position="40"/>
        <end position="60"/>
    </location>
</feature>
<feature type="topological domain" description="Cytoplasmic" evidence="2">
    <location>
        <begin position="61"/>
        <end position="77"/>
    </location>
</feature>
<feature type="transmembrane region" description="Helical" evidence="2">
    <location>
        <begin position="78"/>
        <end position="98"/>
    </location>
</feature>
<feature type="topological domain" description="Extracellular" evidence="2">
    <location>
        <begin position="99"/>
        <end position="120"/>
    </location>
</feature>
<feature type="transmembrane region" description="Helical" evidence="2">
    <location>
        <begin position="121"/>
        <end position="141"/>
    </location>
</feature>
<feature type="topological domain" description="Cytoplasmic" evidence="2">
    <location>
        <position position="142"/>
    </location>
</feature>
<feature type="transmembrane region" description="Helical" evidence="2">
    <location>
        <begin position="143"/>
        <end position="163"/>
    </location>
</feature>
<feature type="topological domain" description="Extracellular" evidence="2">
    <location>
        <begin position="164"/>
        <end position="191"/>
    </location>
</feature>
<feature type="transmembrane region" description="Helical" evidence="2">
    <location>
        <begin position="192"/>
        <end position="212"/>
    </location>
</feature>
<feature type="topological domain" description="Cytoplasmic" evidence="2">
    <location>
        <begin position="213"/>
        <end position="218"/>
    </location>
</feature>
<feature type="transmembrane region" description="Helical" evidence="2">
    <location>
        <begin position="219"/>
        <end position="239"/>
    </location>
</feature>
<feature type="topological domain" description="Extracellular" evidence="2">
    <location>
        <begin position="240"/>
        <end position="248"/>
    </location>
</feature>
<feature type="transmembrane region" description="Helical" evidence="2">
    <location>
        <begin position="249"/>
        <end position="269"/>
    </location>
</feature>
<feature type="topological domain" description="Cytoplasmic" evidence="2">
    <location>
        <begin position="270"/>
        <end position="276"/>
    </location>
</feature>
<feature type="transmembrane region" description="Helical" evidence="2">
    <location>
        <begin position="277"/>
        <end position="297"/>
    </location>
</feature>
<feature type="topological domain" description="Extracellular" evidence="2">
    <location>
        <begin position="298"/>
        <end position="307"/>
    </location>
</feature>
<feature type="transmembrane region" description="Helical" evidence="2">
    <location>
        <begin position="308"/>
        <end position="328"/>
    </location>
</feature>
<feature type="topological domain" description="Cytoplasmic" evidence="2">
    <location>
        <begin position="329"/>
        <end position="702"/>
    </location>
</feature>
<feature type="region of interest" description="Racemase">
    <location>
        <begin position="337"/>
        <end position="702"/>
    </location>
</feature>
<feature type="active site" description="Proton acceptor" evidence="1">
    <location>
        <position position="375"/>
    </location>
</feature>
<feature type="active site" description="Proton acceptor" evidence="1">
    <location>
        <position position="601"/>
    </location>
</feature>
<feature type="binding site" evidence="1">
    <location>
        <position position="469"/>
    </location>
    <ligand>
        <name>substrate</name>
    </ligand>
</feature>
<feature type="binding site" evidence="1">
    <location>
        <position position="650"/>
    </location>
    <ligand>
        <name>substrate</name>
    </ligand>
</feature>
<feature type="modified residue" description="N6-(pyridoxal phosphate)lysine" evidence="1">
    <location>
        <position position="375"/>
    </location>
</feature>
<comment type="cofactor">
    <cofactor evidence="1">
        <name>pyridoxal 5'-phosphate</name>
        <dbReference type="ChEBI" id="CHEBI:597326"/>
    </cofactor>
</comment>
<comment type="subcellular location">
    <subcellularLocation>
        <location evidence="3">Cell membrane</location>
        <topology evidence="3">Multi-pass membrane protein</topology>
    </subcellularLocation>
</comment>
<comment type="similarity">
    <text evidence="3">In the N-terminal section; belongs to the acyltransferase 3 family.</text>
</comment>
<comment type="similarity">
    <text evidence="3">In the C-terminal section; belongs to the alanine racemase family.</text>
</comment>